<proteinExistence type="evidence at transcript level"/>
<keyword id="KW-0966">Cell projection</keyword>
<keyword id="KW-0969">Cilium</keyword>
<keyword id="KW-0175">Coiled coil</keyword>
<keyword id="KW-0963">Cytoplasm</keyword>
<keyword id="KW-0206">Cytoskeleton</keyword>
<keyword id="KW-0282">Flagellum</keyword>
<keyword id="KW-1185">Reference proteome</keyword>
<gene>
    <name type="primary">drc1</name>
    <name type="synonym">ccdc164</name>
</gene>
<organism>
    <name type="scientific">Xenopus laevis</name>
    <name type="common">African clawed frog</name>
    <dbReference type="NCBI Taxonomy" id="8355"/>
    <lineage>
        <taxon>Eukaryota</taxon>
        <taxon>Metazoa</taxon>
        <taxon>Chordata</taxon>
        <taxon>Craniata</taxon>
        <taxon>Vertebrata</taxon>
        <taxon>Euteleostomi</taxon>
        <taxon>Amphibia</taxon>
        <taxon>Batrachia</taxon>
        <taxon>Anura</taxon>
        <taxon>Pipoidea</taxon>
        <taxon>Pipidae</taxon>
        <taxon>Xenopodinae</taxon>
        <taxon>Xenopus</taxon>
        <taxon>Xenopus</taxon>
    </lineage>
</organism>
<dbReference type="EMBL" id="BC055987">
    <property type="protein sequence ID" value="AAH55987.1"/>
    <property type="molecule type" value="mRNA"/>
</dbReference>
<dbReference type="RefSeq" id="NP_001079840.1">
    <property type="nucleotide sequence ID" value="NM_001086371.1"/>
</dbReference>
<dbReference type="SMR" id="Q7T0Y4"/>
<dbReference type="DNASU" id="379530"/>
<dbReference type="GeneID" id="379530"/>
<dbReference type="KEGG" id="xla:379530"/>
<dbReference type="AGR" id="Xenbase:XB-GENE-5967074"/>
<dbReference type="CTD" id="379530"/>
<dbReference type="Xenbase" id="XB-GENE-5967074">
    <property type="gene designation" value="drc1.L"/>
</dbReference>
<dbReference type="OrthoDB" id="10260459at2759"/>
<dbReference type="Proteomes" id="UP000186698">
    <property type="component" value="Chromosome 5L"/>
</dbReference>
<dbReference type="Bgee" id="379530">
    <property type="expression patterns" value="Expressed in testis and 16 other cell types or tissues"/>
</dbReference>
<dbReference type="GO" id="GO:0005858">
    <property type="term" value="C:axonemal dynein complex"/>
    <property type="evidence" value="ECO:0007669"/>
    <property type="project" value="InterPro"/>
</dbReference>
<dbReference type="GO" id="GO:0005930">
    <property type="term" value="C:axoneme"/>
    <property type="evidence" value="ECO:0000250"/>
    <property type="project" value="UniProtKB"/>
</dbReference>
<dbReference type="GO" id="GO:0031514">
    <property type="term" value="C:motile cilium"/>
    <property type="evidence" value="ECO:0007669"/>
    <property type="project" value="UniProtKB-KW"/>
</dbReference>
<dbReference type="GO" id="GO:0070286">
    <property type="term" value="P:axonemal dynein complex assembly"/>
    <property type="evidence" value="ECO:0000250"/>
    <property type="project" value="UniProtKB"/>
</dbReference>
<dbReference type="GO" id="GO:0060285">
    <property type="term" value="P:cilium-dependent cell motility"/>
    <property type="evidence" value="ECO:0000250"/>
    <property type="project" value="UniProtKB"/>
</dbReference>
<dbReference type="GO" id="GO:0003352">
    <property type="term" value="P:regulation of cilium movement"/>
    <property type="evidence" value="ECO:0000318"/>
    <property type="project" value="GO_Central"/>
</dbReference>
<dbReference type="InterPro" id="IPR039505">
    <property type="entry name" value="DRC1/2_N"/>
</dbReference>
<dbReference type="InterPro" id="IPR039750">
    <property type="entry name" value="DRC1/DRC2"/>
</dbReference>
<dbReference type="InterPro" id="IPR029440">
    <property type="entry name" value="DRC1_C"/>
</dbReference>
<dbReference type="PANTHER" id="PTHR21625:SF1">
    <property type="entry name" value="DYNEIN REGULATORY COMPLEX PROTEIN 1"/>
    <property type="match status" value="1"/>
</dbReference>
<dbReference type="PANTHER" id="PTHR21625">
    <property type="entry name" value="NYD-SP28 PROTEIN"/>
    <property type="match status" value="1"/>
</dbReference>
<dbReference type="Pfam" id="PF14772">
    <property type="entry name" value="NYD-SP28"/>
    <property type="match status" value="1"/>
</dbReference>
<dbReference type="Pfam" id="PF14775">
    <property type="entry name" value="NYD-SP28_assoc"/>
    <property type="match status" value="1"/>
</dbReference>
<name>DRC1_XENLA</name>
<evidence type="ECO:0000250" key="1">
    <source>
        <dbReference type="UniProtKB" id="P0DL09"/>
    </source>
</evidence>
<evidence type="ECO:0000250" key="2">
    <source>
        <dbReference type="UniProtKB" id="Q96MC2"/>
    </source>
</evidence>
<evidence type="ECO:0000255" key="3"/>
<evidence type="ECO:0000256" key="4">
    <source>
        <dbReference type="SAM" id="MobiDB-lite"/>
    </source>
</evidence>
<evidence type="ECO:0000305" key="5"/>
<protein>
    <recommendedName>
        <fullName>Dynein regulatory complex protein 1</fullName>
    </recommendedName>
    <alternativeName>
        <fullName>Coiled-coil domain-containing protein 164</fullName>
    </alternativeName>
</protein>
<comment type="function">
    <text evidence="1 2">Component of the nexin-dynein regulatory complex (N-DRC) a key regulator of ciliary/flagellar motility which maintains the alignment and integrity of the distal axoneme and regulates microtubule sliding in motile axonemes. Plays a critical role in the assembly of N-DRC and also stabilizes the assembly of multiple inner dynein arms and radial spokes. Coassembles with CCDC65/DRC2 to form a central scaffold needed for assembly of the N-DRC and its attachment to the outer doublet microtubules.</text>
</comment>
<comment type="subunit">
    <text evidence="1">Component of the nexin-dynein regulatory complex (N-DRC).</text>
</comment>
<comment type="subcellular location">
    <subcellularLocation>
        <location evidence="1">Cytoplasm</location>
        <location evidence="1">Cytoskeleton</location>
        <location evidence="1">Cilium axoneme</location>
    </subcellularLocation>
    <subcellularLocation>
        <location evidence="1">Cytoplasm</location>
        <location evidence="1">Cytoskeleton</location>
        <location evidence="1">Flagellum axoneme</location>
    </subcellularLocation>
</comment>
<comment type="similarity">
    <text evidence="5">Belongs to the DRC1 family.</text>
</comment>
<accession>Q7T0Y4</accession>
<sequence>MSLYERESEESAVAGPSLDSEDQQQRIEARRLRIVTRIEAKRREALGEDLKILKKKTEEPRKSHKQTEDSRQRLGKLVNDGSQLVTNIQIATDARETQRRGEEEELKRLRREKLDNEAKSSLEKFEEITKRWTLDKAKQVPQKMWEILNTQQQQCAQLIEDKNNLISDLQKELRRKDDQYVKDLKKQAEDIDLLVERMEEQIKNLIKTYRQELLQIEKVFELERRELLTANRNTWEQGMQGRRDKELESLMSRMKKVEEYENQLKQLRVQDGEEYNMIKIKLETDVQILQQQLQQMKATYQLNQEKLEYNYQVLKKRDEENTITKSQQKRKITRLQDVLNNLRLKQAKQVKQYKEENQSLMDDYKRIVEQYKELQKKMRHFSAVDAKMFQDIWLMNEEEMKQLVQKALEADQVIQEQQLGMCWEPPDLCFMDNVGPLLGKLKDQKSAMSLAQEVMSSHAPGDQSSASEGETDGRQCREVSAETVKHILELLCDESGFLIENKLTRLLSPLERDERSLIKLDSIFGALGVTVEEDVYKLVEFLCRYKREPEEEGDAGGSLEPGSKAHGLIHSNDVLRAVKAFVMDFQKPRGKVSRLRLMEERDSREDTEYWAAAAKAIPESRFRVWDALESALEKYYDVLGSRGQLITETVSLRQQNTELRTLLHQYLNSKINVELEIPPTQMMQGEYPHT</sequence>
<feature type="chain" id="PRO_0000277885" description="Dynein regulatory complex protein 1">
    <location>
        <begin position="1"/>
        <end position="690"/>
    </location>
</feature>
<feature type="region of interest" description="Disordered" evidence="4">
    <location>
        <begin position="1"/>
        <end position="25"/>
    </location>
</feature>
<feature type="region of interest" description="Disordered" evidence="4">
    <location>
        <begin position="49"/>
        <end position="72"/>
    </location>
</feature>
<feature type="region of interest" description="Disordered" evidence="4">
    <location>
        <begin position="451"/>
        <end position="476"/>
    </location>
</feature>
<feature type="coiled-coil region" evidence="3">
    <location>
        <begin position="92"/>
        <end position="419"/>
    </location>
</feature>
<reference key="1">
    <citation type="submission" date="2003-08" db="EMBL/GenBank/DDBJ databases">
        <authorList>
            <consortium name="NIH - Xenopus Gene Collection (XGC) project"/>
        </authorList>
    </citation>
    <scope>NUCLEOTIDE SEQUENCE [LARGE SCALE MRNA]</scope>
    <source>
        <tissue>Embryo</tissue>
    </source>
</reference>